<gene>
    <name evidence="1" type="primary">cysD</name>
    <name type="ordered locus">Mvan_4423</name>
</gene>
<reference key="1">
    <citation type="submission" date="2006-12" db="EMBL/GenBank/DDBJ databases">
        <title>Complete sequence of Mycobacterium vanbaalenii PYR-1.</title>
        <authorList>
            <consortium name="US DOE Joint Genome Institute"/>
            <person name="Copeland A."/>
            <person name="Lucas S."/>
            <person name="Lapidus A."/>
            <person name="Barry K."/>
            <person name="Detter J.C."/>
            <person name="Glavina del Rio T."/>
            <person name="Hammon N."/>
            <person name="Israni S."/>
            <person name="Dalin E."/>
            <person name="Tice H."/>
            <person name="Pitluck S."/>
            <person name="Singan V."/>
            <person name="Schmutz J."/>
            <person name="Larimer F."/>
            <person name="Land M."/>
            <person name="Hauser L."/>
            <person name="Kyrpides N."/>
            <person name="Anderson I.J."/>
            <person name="Miller C."/>
            <person name="Richardson P."/>
        </authorList>
    </citation>
    <scope>NUCLEOTIDE SEQUENCE [LARGE SCALE GENOMIC DNA]</scope>
    <source>
        <strain>DSM 7251 / JCM 13017 / BCRC 16820 / KCTC 9966 / NRRL B-24157 / PYR-1</strain>
    </source>
</reference>
<dbReference type="EC" id="2.7.7.4" evidence="1"/>
<dbReference type="EMBL" id="CP000511">
    <property type="protein sequence ID" value="ABM15199.1"/>
    <property type="molecule type" value="Genomic_DNA"/>
</dbReference>
<dbReference type="RefSeq" id="WP_011781577.1">
    <property type="nucleotide sequence ID" value="NZ_JACKSD010000061.1"/>
</dbReference>
<dbReference type="SMR" id="A1TDE9"/>
<dbReference type="STRING" id="350058.Mvan_4423"/>
<dbReference type="KEGG" id="mva:Mvan_4423"/>
<dbReference type="eggNOG" id="COG0175">
    <property type="taxonomic scope" value="Bacteria"/>
</dbReference>
<dbReference type="HOGENOM" id="CLU_043026_0_0_11"/>
<dbReference type="UniPathway" id="UPA00140">
    <property type="reaction ID" value="UER00204"/>
</dbReference>
<dbReference type="Proteomes" id="UP000009159">
    <property type="component" value="Chromosome"/>
</dbReference>
<dbReference type="GO" id="GO:0005524">
    <property type="term" value="F:ATP binding"/>
    <property type="evidence" value="ECO:0007669"/>
    <property type="project" value="UniProtKB-KW"/>
</dbReference>
<dbReference type="GO" id="GO:0004781">
    <property type="term" value="F:sulfate adenylyltransferase (ATP) activity"/>
    <property type="evidence" value="ECO:0007669"/>
    <property type="project" value="UniProtKB-UniRule"/>
</dbReference>
<dbReference type="GO" id="GO:0070814">
    <property type="term" value="P:hydrogen sulfide biosynthetic process"/>
    <property type="evidence" value="ECO:0007669"/>
    <property type="project" value="UniProtKB-UniRule"/>
</dbReference>
<dbReference type="GO" id="GO:0000103">
    <property type="term" value="P:sulfate assimilation"/>
    <property type="evidence" value="ECO:0007669"/>
    <property type="project" value="UniProtKB-UniRule"/>
</dbReference>
<dbReference type="FunFam" id="3.40.50.620:FF:000002">
    <property type="entry name" value="Sulfate adenylyltransferase subunit 2"/>
    <property type="match status" value="1"/>
</dbReference>
<dbReference type="Gene3D" id="3.40.50.620">
    <property type="entry name" value="HUPs"/>
    <property type="match status" value="1"/>
</dbReference>
<dbReference type="HAMAP" id="MF_00064">
    <property type="entry name" value="Sulf_adenylyltr_sub2"/>
    <property type="match status" value="1"/>
</dbReference>
<dbReference type="InterPro" id="IPR002500">
    <property type="entry name" value="PAPS_reduct_dom"/>
</dbReference>
<dbReference type="InterPro" id="IPR014729">
    <property type="entry name" value="Rossmann-like_a/b/a_fold"/>
</dbReference>
<dbReference type="InterPro" id="IPR011784">
    <property type="entry name" value="SO4_adenylTrfase_ssu"/>
</dbReference>
<dbReference type="InterPro" id="IPR050128">
    <property type="entry name" value="Sulfate_adenylyltrnsfr_sub2"/>
</dbReference>
<dbReference type="NCBIfam" id="TIGR02039">
    <property type="entry name" value="CysD"/>
    <property type="match status" value="1"/>
</dbReference>
<dbReference type="NCBIfam" id="NF003587">
    <property type="entry name" value="PRK05253.1"/>
    <property type="match status" value="1"/>
</dbReference>
<dbReference type="NCBIfam" id="NF009214">
    <property type="entry name" value="PRK12563.1"/>
    <property type="match status" value="1"/>
</dbReference>
<dbReference type="PANTHER" id="PTHR43196">
    <property type="entry name" value="SULFATE ADENYLYLTRANSFERASE SUBUNIT 2"/>
    <property type="match status" value="1"/>
</dbReference>
<dbReference type="PANTHER" id="PTHR43196:SF1">
    <property type="entry name" value="SULFATE ADENYLYLTRANSFERASE SUBUNIT 2"/>
    <property type="match status" value="1"/>
</dbReference>
<dbReference type="Pfam" id="PF01507">
    <property type="entry name" value="PAPS_reduct"/>
    <property type="match status" value="1"/>
</dbReference>
<dbReference type="PIRSF" id="PIRSF002936">
    <property type="entry name" value="CysDAde_trans"/>
    <property type="match status" value="1"/>
</dbReference>
<dbReference type="SUPFAM" id="SSF52402">
    <property type="entry name" value="Adenine nucleotide alpha hydrolases-like"/>
    <property type="match status" value="1"/>
</dbReference>
<proteinExistence type="inferred from homology"/>
<organism>
    <name type="scientific">Mycolicibacterium vanbaalenii (strain DSM 7251 / JCM 13017 / BCRC 16820 / KCTC 9966 / NRRL B-24157 / PYR-1)</name>
    <name type="common">Mycobacterium vanbaalenii</name>
    <dbReference type="NCBI Taxonomy" id="350058"/>
    <lineage>
        <taxon>Bacteria</taxon>
        <taxon>Bacillati</taxon>
        <taxon>Actinomycetota</taxon>
        <taxon>Actinomycetes</taxon>
        <taxon>Mycobacteriales</taxon>
        <taxon>Mycobacteriaceae</taxon>
        <taxon>Mycolicibacterium</taxon>
    </lineage>
</organism>
<comment type="function">
    <text evidence="1">With CysN forms the ATP sulfurylase (ATPS) that catalyzes the adenylation of sulfate producing adenosine 5'-phosphosulfate (APS) and diphosphate, the first enzymatic step in sulfur assimilation pathway. APS synthesis involves the formation of a high-energy phosphoric-sulfuric acid anhydride bond driven by GTP hydrolysis by CysN coupled to ATP hydrolysis by CysD.</text>
</comment>
<comment type="catalytic activity">
    <reaction evidence="1">
        <text>sulfate + ATP + H(+) = adenosine 5'-phosphosulfate + diphosphate</text>
        <dbReference type="Rhea" id="RHEA:18133"/>
        <dbReference type="ChEBI" id="CHEBI:15378"/>
        <dbReference type="ChEBI" id="CHEBI:16189"/>
        <dbReference type="ChEBI" id="CHEBI:30616"/>
        <dbReference type="ChEBI" id="CHEBI:33019"/>
        <dbReference type="ChEBI" id="CHEBI:58243"/>
        <dbReference type="EC" id="2.7.7.4"/>
    </reaction>
</comment>
<comment type="pathway">
    <text evidence="1">Sulfur metabolism; hydrogen sulfide biosynthesis; sulfite from sulfate: step 1/3.</text>
</comment>
<comment type="subunit">
    <text evidence="1">Heterodimer composed of CysD, the smaller subunit, and CysN.</text>
</comment>
<comment type="similarity">
    <text evidence="1">Belongs to the PAPS reductase family. CysD subfamily.</text>
</comment>
<protein>
    <recommendedName>
        <fullName evidence="1">Sulfate adenylyltransferase subunit 2</fullName>
        <ecNumber evidence="1">2.7.7.4</ecNumber>
    </recommendedName>
    <alternativeName>
        <fullName evidence="1">ATP-sulfurylase small subunit</fullName>
    </alternativeName>
    <alternativeName>
        <fullName evidence="1">Sulfate adenylate transferase</fullName>
        <shortName evidence="1">SAT</shortName>
    </alternativeName>
</protein>
<keyword id="KW-0067">ATP-binding</keyword>
<keyword id="KW-0547">Nucleotide-binding</keyword>
<keyword id="KW-0548">Nucleotidyltransferase</keyword>
<keyword id="KW-0808">Transferase</keyword>
<feature type="chain" id="PRO_1000092212" description="Sulfate adenylyltransferase subunit 2">
    <location>
        <begin position="1"/>
        <end position="309"/>
    </location>
</feature>
<sequence>MTATDELTQNAGRYELSHLRALEAEAIHIIREVAAEFERPVLLFSGGKDSIVMLHLAIKAFRPGRLPFPVMHVDTGHNFEEVLAARDELVAESGVRLVVAKVQDDIDAGRVVETIPSRNPMQTFTLLRAIRENKFDAAFGGARRDEEKARAKERVFSFRDEFGQWDPKNQRPELWNLYNGRHRKGEHIRAFPLSNWTEFDIWSYIGAEKIKLPSIYYAHQRKVFERDGMLLAVHKHLQPRKDEPIIEKSVRFRTVGDVTCTGCVESTAATVSEVIAETAISRLTERGATRADDRISEAGMEDRKREGYF</sequence>
<evidence type="ECO:0000255" key="1">
    <source>
        <dbReference type="HAMAP-Rule" id="MF_00064"/>
    </source>
</evidence>
<accession>A1TDE9</accession>
<name>CYSD_MYCVP</name>